<proteinExistence type="evidence at protein level"/>
<reference evidence="13" key="1">
    <citation type="journal article" date="2000" name="Science">
        <title>The genome sequence of Drosophila melanogaster.</title>
        <authorList>
            <person name="Adams M.D."/>
            <person name="Celniker S.E."/>
            <person name="Holt R.A."/>
            <person name="Evans C.A."/>
            <person name="Gocayne J.D."/>
            <person name="Amanatides P.G."/>
            <person name="Scherer S.E."/>
            <person name="Li P.W."/>
            <person name="Hoskins R.A."/>
            <person name="Galle R.F."/>
            <person name="George R.A."/>
            <person name="Lewis S.E."/>
            <person name="Richards S."/>
            <person name="Ashburner M."/>
            <person name="Henderson S.N."/>
            <person name="Sutton G.G."/>
            <person name="Wortman J.R."/>
            <person name="Yandell M.D."/>
            <person name="Zhang Q."/>
            <person name="Chen L.X."/>
            <person name="Brandon R.C."/>
            <person name="Rogers Y.-H.C."/>
            <person name="Blazej R.G."/>
            <person name="Champe M."/>
            <person name="Pfeiffer B.D."/>
            <person name="Wan K.H."/>
            <person name="Doyle C."/>
            <person name="Baxter E.G."/>
            <person name="Helt G."/>
            <person name="Nelson C.R."/>
            <person name="Miklos G.L.G."/>
            <person name="Abril J.F."/>
            <person name="Agbayani A."/>
            <person name="An H.-J."/>
            <person name="Andrews-Pfannkoch C."/>
            <person name="Baldwin D."/>
            <person name="Ballew R.M."/>
            <person name="Basu A."/>
            <person name="Baxendale J."/>
            <person name="Bayraktaroglu L."/>
            <person name="Beasley E.M."/>
            <person name="Beeson K.Y."/>
            <person name="Benos P.V."/>
            <person name="Berman B.P."/>
            <person name="Bhandari D."/>
            <person name="Bolshakov S."/>
            <person name="Borkova D."/>
            <person name="Botchan M.R."/>
            <person name="Bouck J."/>
            <person name="Brokstein P."/>
            <person name="Brottier P."/>
            <person name="Burtis K.C."/>
            <person name="Busam D.A."/>
            <person name="Butler H."/>
            <person name="Cadieu E."/>
            <person name="Center A."/>
            <person name="Chandra I."/>
            <person name="Cherry J.M."/>
            <person name="Cawley S."/>
            <person name="Dahlke C."/>
            <person name="Davenport L.B."/>
            <person name="Davies P."/>
            <person name="de Pablos B."/>
            <person name="Delcher A."/>
            <person name="Deng Z."/>
            <person name="Mays A.D."/>
            <person name="Dew I."/>
            <person name="Dietz S.M."/>
            <person name="Dodson K."/>
            <person name="Doup L.E."/>
            <person name="Downes M."/>
            <person name="Dugan-Rocha S."/>
            <person name="Dunkov B.C."/>
            <person name="Dunn P."/>
            <person name="Durbin K.J."/>
            <person name="Evangelista C.C."/>
            <person name="Ferraz C."/>
            <person name="Ferriera S."/>
            <person name="Fleischmann W."/>
            <person name="Fosler C."/>
            <person name="Gabrielian A.E."/>
            <person name="Garg N.S."/>
            <person name="Gelbart W.M."/>
            <person name="Glasser K."/>
            <person name="Glodek A."/>
            <person name="Gong F."/>
            <person name="Gorrell J.H."/>
            <person name="Gu Z."/>
            <person name="Guan P."/>
            <person name="Harris M."/>
            <person name="Harris N.L."/>
            <person name="Harvey D.A."/>
            <person name="Heiman T.J."/>
            <person name="Hernandez J.R."/>
            <person name="Houck J."/>
            <person name="Hostin D."/>
            <person name="Houston K.A."/>
            <person name="Howland T.J."/>
            <person name="Wei M.-H."/>
            <person name="Ibegwam C."/>
            <person name="Jalali M."/>
            <person name="Kalush F."/>
            <person name="Karpen G.H."/>
            <person name="Ke Z."/>
            <person name="Kennison J.A."/>
            <person name="Ketchum K.A."/>
            <person name="Kimmel B.E."/>
            <person name="Kodira C.D."/>
            <person name="Kraft C.L."/>
            <person name="Kravitz S."/>
            <person name="Kulp D."/>
            <person name="Lai Z."/>
            <person name="Lasko P."/>
            <person name="Lei Y."/>
            <person name="Levitsky A.A."/>
            <person name="Li J.H."/>
            <person name="Li Z."/>
            <person name="Liang Y."/>
            <person name="Lin X."/>
            <person name="Liu X."/>
            <person name="Mattei B."/>
            <person name="McIntosh T.C."/>
            <person name="McLeod M.P."/>
            <person name="McPherson D."/>
            <person name="Merkulov G."/>
            <person name="Milshina N.V."/>
            <person name="Mobarry C."/>
            <person name="Morris J."/>
            <person name="Moshrefi A."/>
            <person name="Mount S.M."/>
            <person name="Moy M."/>
            <person name="Murphy B."/>
            <person name="Murphy L."/>
            <person name="Muzny D.M."/>
            <person name="Nelson D.L."/>
            <person name="Nelson D.R."/>
            <person name="Nelson K.A."/>
            <person name="Nixon K."/>
            <person name="Nusskern D.R."/>
            <person name="Pacleb J.M."/>
            <person name="Palazzolo M."/>
            <person name="Pittman G.S."/>
            <person name="Pan S."/>
            <person name="Pollard J."/>
            <person name="Puri V."/>
            <person name="Reese M.G."/>
            <person name="Reinert K."/>
            <person name="Remington K."/>
            <person name="Saunders R.D.C."/>
            <person name="Scheeler F."/>
            <person name="Shen H."/>
            <person name="Shue B.C."/>
            <person name="Siden-Kiamos I."/>
            <person name="Simpson M."/>
            <person name="Skupski M.P."/>
            <person name="Smith T.J."/>
            <person name="Spier E."/>
            <person name="Spradling A.C."/>
            <person name="Stapleton M."/>
            <person name="Strong R."/>
            <person name="Sun E."/>
            <person name="Svirskas R."/>
            <person name="Tector C."/>
            <person name="Turner R."/>
            <person name="Venter E."/>
            <person name="Wang A.H."/>
            <person name="Wang X."/>
            <person name="Wang Z.-Y."/>
            <person name="Wassarman D.A."/>
            <person name="Weinstock G.M."/>
            <person name="Weissenbach J."/>
            <person name="Williams S.M."/>
            <person name="Woodage T."/>
            <person name="Worley K.C."/>
            <person name="Wu D."/>
            <person name="Yang S."/>
            <person name="Yao Q.A."/>
            <person name="Ye J."/>
            <person name="Yeh R.-F."/>
            <person name="Zaveri J.S."/>
            <person name="Zhan M."/>
            <person name="Zhang G."/>
            <person name="Zhao Q."/>
            <person name="Zheng L."/>
            <person name="Zheng X.H."/>
            <person name="Zhong F.N."/>
            <person name="Zhong W."/>
            <person name="Zhou X."/>
            <person name="Zhu S.C."/>
            <person name="Zhu X."/>
            <person name="Smith H.O."/>
            <person name="Gibbs R.A."/>
            <person name="Myers E.W."/>
            <person name="Rubin G.M."/>
            <person name="Venter J.C."/>
        </authorList>
    </citation>
    <scope>NUCLEOTIDE SEQUENCE [LARGE SCALE GENOMIC DNA]</scope>
    <source>
        <strain evidence="13">Berkeley</strain>
    </source>
</reference>
<reference evidence="13" key="2">
    <citation type="journal article" date="2002" name="Genome Biol.">
        <title>Annotation of the Drosophila melanogaster euchromatic genome: a systematic review.</title>
        <authorList>
            <person name="Misra S."/>
            <person name="Crosby M.A."/>
            <person name="Mungall C.J."/>
            <person name="Matthews B.B."/>
            <person name="Campbell K.S."/>
            <person name="Hradecky P."/>
            <person name="Huang Y."/>
            <person name="Kaminker J.S."/>
            <person name="Millburn G.H."/>
            <person name="Prochnik S.E."/>
            <person name="Smith C.D."/>
            <person name="Tupy J.L."/>
            <person name="Whitfield E.J."/>
            <person name="Bayraktaroglu L."/>
            <person name="Berman B.P."/>
            <person name="Bettencourt B.R."/>
            <person name="Celniker S.E."/>
            <person name="de Grey A.D.N.J."/>
            <person name="Drysdale R.A."/>
            <person name="Harris N.L."/>
            <person name="Richter J."/>
            <person name="Russo S."/>
            <person name="Schroeder A.J."/>
            <person name="Shu S.Q."/>
            <person name="Stapleton M."/>
            <person name="Yamada C."/>
            <person name="Ashburner M."/>
            <person name="Gelbart W.M."/>
            <person name="Rubin G.M."/>
            <person name="Lewis S.E."/>
        </authorList>
    </citation>
    <scope>GENOME REANNOTATION</scope>
    <source>
        <strain evidence="13">Berkeley</strain>
    </source>
</reference>
<reference evidence="10" key="3">
    <citation type="journal article" date="2002" name="Genome Biol.">
        <title>A Drosophila full-length cDNA resource.</title>
        <authorList>
            <person name="Stapleton M."/>
            <person name="Carlson J.W."/>
            <person name="Brokstein P."/>
            <person name="Yu C."/>
            <person name="Champe M."/>
            <person name="George R.A."/>
            <person name="Guarin H."/>
            <person name="Kronmiller B."/>
            <person name="Pacleb J.M."/>
            <person name="Park S."/>
            <person name="Wan K.H."/>
            <person name="Rubin G.M."/>
            <person name="Celniker S.E."/>
        </authorList>
    </citation>
    <scope>NUCLEOTIDE SEQUENCE [LARGE SCALE MRNA]</scope>
    <source>
        <strain evidence="10">Berkeley</strain>
        <tissue evidence="10">Embryo</tissue>
    </source>
</reference>
<reference evidence="11" key="4">
    <citation type="submission" date="2010-12" db="EMBL/GenBank/DDBJ databases">
        <authorList>
            <person name="Carlson J."/>
            <person name="Booth B."/>
            <person name="Frise E."/>
            <person name="Park S."/>
            <person name="Wan K."/>
            <person name="Yu C."/>
            <person name="Celniker S."/>
        </authorList>
    </citation>
    <scope>NUCLEOTIDE SEQUENCE [LARGE SCALE MRNA] (ISOFORM B)</scope>
</reference>
<reference evidence="9" key="5">
    <citation type="journal article" date="2016" name="Genes Dev.">
        <title>The Enok acetyltransferase complex interacts with Elg1 and negatively regulates PCNA unloading to promote the G1/S transition.</title>
        <authorList>
            <person name="Huang F."/>
            <person name="Saraf A."/>
            <person name="Florens L."/>
            <person name="Kusch T."/>
            <person name="Swanson S.K."/>
            <person name="Szerszen L.T."/>
            <person name="Li G."/>
            <person name="Dutta A."/>
            <person name="Washburn M.P."/>
            <person name="Abmayr S.M."/>
            <person name="Workman J.L."/>
        </authorList>
    </citation>
    <scope>FUNCTION</scope>
    <scope>IDENTIFICATION IN THE ENOK COMPLEX</scope>
    <scope>SUBCELLULAR LOCATION</scope>
</reference>
<organism evidence="13">
    <name type="scientific">Drosophila melanogaster</name>
    <name type="common">Fruit fly</name>
    <dbReference type="NCBI Taxonomy" id="7227"/>
    <lineage>
        <taxon>Eukaryota</taxon>
        <taxon>Metazoa</taxon>
        <taxon>Ecdysozoa</taxon>
        <taxon>Arthropoda</taxon>
        <taxon>Hexapoda</taxon>
        <taxon>Insecta</taxon>
        <taxon>Pterygota</taxon>
        <taxon>Neoptera</taxon>
        <taxon>Endopterygota</taxon>
        <taxon>Diptera</taxon>
        <taxon>Brachycera</taxon>
        <taxon>Muscomorpha</taxon>
        <taxon>Ephydroidea</taxon>
        <taxon>Drosophilidae</taxon>
        <taxon>Drosophila</taxon>
        <taxon>Sophophora</taxon>
    </lineage>
</organism>
<dbReference type="EMBL" id="AE014134">
    <property type="protein sequence ID" value="AAF53297.2"/>
    <property type="molecule type" value="Genomic_DNA"/>
</dbReference>
<dbReference type="EMBL" id="AE014134">
    <property type="protein sequence ID" value="AAN10835.1"/>
    <property type="molecule type" value="Genomic_DNA"/>
</dbReference>
<dbReference type="EMBL" id="AY061507">
    <property type="protein sequence ID" value="AAL29055.1"/>
    <property type="molecule type" value="mRNA"/>
</dbReference>
<dbReference type="EMBL" id="BT125797">
    <property type="protein sequence ID" value="ADR66771.1"/>
    <property type="molecule type" value="mRNA"/>
</dbReference>
<dbReference type="RefSeq" id="NP_609647.1">
    <molecule id="Q9VJY8-1"/>
    <property type="nucleotide sequence ID" value="NM_135803.4"/>
</dbReference>
<dbReference type="RefSeq" id="NP_723814.1">
    <molecule id="Q9VJY8-2"/>
    <property type="nucleotide sequence ID" value="NM_165042.3"/>
</dbReference>
<dbReference type="SMR" id="Q9VJY8"/>
<dbReference type="ComplexPortal" id="CPX-2442">
    <property type="entry name" value="Enok histone acetyltransferase complex"/>
</dbReference>
<dbReference type="FunCoup" id="Q9VJY8">
    <property type="interactions" value="1070"/>
</dbReference>
<dbReference type="IntAct" id="Q9VJY8">
    <property type="interactions" value="2"/>
</dbReference>
<dbReference type="STRING" id="7227.FBpp0080103"/>
<dbReference type="PaxDb" id="7227-FBpp0080103"/>
<dbReference type="DNASU" id="34752"/>
<dbReference type="EnsemblMetazoa" id="FBtr0080525">
    <molecule id="Q9VJY8-1"/>
    <property type="protein sequence ID" value="FBpp0080103"/>
    <property type="gene ID" value="FBgn0032516"/>
</dbReference>
<dbReference type="EnsemblMetazoa" id="FBtr0080526">
    <molecule id="Q9VJY8-2"/>
    <property type="protein sequence ID" value="FBpp0080104"/>
    <property type="gene ID" value="FBgn0032516"/>
</dbReference>
<dbReference type="GeneID" id="34752"/>
<dbReference type="KEGG" id="dme:Dmel_CG9293"/>
<dbReference type="UCSC" id="CG9293-RA">
    <molecule id="Q9VJY8-1"/>
    <property type="organism name" value="d. melanogaster"/>
</dbReference>
<dbReference type="UCSC" id="CG9293-RB">
    <property type="organism name" value="d. melanogaster"/>
</dbReference>
<dbReference type="AGR" id="FB:FBgn0032516"/>
<dbReference type="CTD" id="84289"/>
<dbReference type="FlyBase" id="FBgn0032516">
    <property type="gene designation" value="Ing5"/>
</dbReference>
<dbReference type="VEuPathDB" id="VectorBase:FBgn0032516"/>
<dbReference type="eggNOG" id="KOG1973">
    <property type="taxonomic scope" value="Eukaryota"/>
</dbReference>
<dbReference type="GeneTree" id="ENSGT00940000158159"/>
<dbReference type="HOGENOM" id="CLU_031900_5_1_1"/>
<dbReference type="InParanoid" id="Q9VJY8"/>
<dbReference type="OMA" id="GPNCKYE"/>
<dbReference type="OrthoDB" id="5411773at2759"/>
<dbReference type="Reactome" id="R-DME-6804758">
    <property type="pathway name" value="Regulation of TP53 Activity through Acetylation"/>
</dbReference>
<dbReference type="BioGRID-ORCS" id="34752">
    <property type="hits" value="0 hits in 3 CRISPR screens"/>
</dbReference>
<dbReference type="ChiTaRS" id="CG9293">
    <property type="organism name" value="fly"/>
</dbReference>
<dbReference type="GenomeRNAi" id="34752"/>
<dbReference type="PRO" id="PR:Q9VJY8"/>
<dbReference type="Proteomes" id="UP000000803">
    <property type="component" value="Chromosome 2L"/>
</dbReference>
<dbReference type="Bgee" id="FBgn0032516">
    <property type="expression patterns" value="Expressed in saliva-secreting gland and 155 other cell types or tissues"/>
</dbReference>
<dbReference type="ExpressionAtlas" id="Q9VJY8">
    <property type="expression patterns" value="baseline and differential"/>
</dbReference>
<dbReference type="GO" id="GO:0070776">
    <property type="term" value="C:MOZ/MORF histone acetyltransferase complex"/>
    <property type="evidence" value="ECO:0000314"/>
    <property type="project" value="FlyBase"/>
</dbReference>
<dbReference type="GO" id="GO:0005634">
    <property type="term" value="C:nucleus"/>
    <property type="evidence" value="ECO:0000318"/>
    <property type="project" value="GO_Central"/>
</dbReference>
<dbReference type="GO" id="GO:0010698">
    <property type="term" value="F:acetyltransferase activator activity"/>
    <property type="evidence" value="ECO:0000314"/>
    <property type="project" value="FlyBase"/>
</dbReference>
<dbReference type="GO" id="GO:0035064">
    <property type="term" value="F:methylated histone binding"/>
    <property type="evidence" value="ECO:0000318"/>
    <property type="project" value="GO_Central"/>
</dbReference>
<dbReference type="GO" id="GO:0008270">
    <property type="term" value="F:zinc ion binding"/>
    <property type="evidence" value="ECO:0007669"/>
    <property type="project" value="UniProtKB-KW"/>
</dbReference>
<dbReference type="GO" id="GO:0006325">
    <property type="term" value="P:chromatin organization"/>
    <property type="evidence" value="ECO:0007669"/>
    <property type="project" value="UniProtKB-KW"/>
</dbReference>
<dbReference type="GO" id="GO:0006355">
    <property type="term" value="P:regulation of DNA-templated transcription"/>
    <property type="evidence" value="ECO:0000318"/>
    <property type="project" value="GO_Central"/>
</dbReference>
<dbReference type="CDD" id="cd16859">
    <property type="entry name" value="ING_ING4_5"/>
    <property type="match status" value="1"/>
</dbReference>
<dbReference type="CDD" id="cd15586">
    <property type="entry name" value="PHD_ING4_5"/>
    <property type="match status" value="1"/>
</dbReference>
<dbReference type="FunFam" id="3.30.40.10:FF:000016">
    <property type="entry name" value="Inhibitor of growth protein"/>
    <property type="match status" value="1"/>
</dbReference>
<dbReference type="Gene3D" id="6.10.140.1740">
    <property type="match status" value="1"/>
</dbReference>
<dbReference type="Gene3D" id="3.30.40.10">
    <property type="entry name" value="Zinc/RING finger domain, C3HC4 (zinc finger)"/>
    <property type="match status" value="1"/>
</dbReference>
<dbReference type="InterPro" id="IPR028651">
    <property type="entry name" value="ING_fam"/>
</dbReference>
<dbReference type="InterPro" id="IPR024610">
    <property type="entry name" value="ING_N_histone-binding"/>
</dbReference>
<dbReference type="InterPro" id="IPR019786">
    <property type="entry name" value="Zinc_finger_PHD-type_CS"/>
</dbReference>
<dbReference type="InterPro" id="IPR011011">
    <property type="entry name" value="Znf_FYVE_PHD"/>
</dbReference>
<dbReference type="InterPro" id="IPR001965">
    <property type="entry name" value="Znf_PHD"/>
</dbReference>
<dbReference type="InterPro" id="IPR019787">
    <property type="entry name" value="Znf_PHD-finger"/>
</dbReference>
<dbReference type="InterPro" id="IPR013083">
    <property type="entry name" value="Znf_RING/FYVE/PHD"/>
</dbReference>
<dbReference type="PANTHER" id="PTHR10333">
    <property type="entry name" value="INHIBITOR OF GROWTH PROTEIN"/>
    <property type="match status" value="1"/>
</dbReference>
<dbReference type="PANTHER" id="PTHR10333:SF42">
    <property type="entry name" value="INHIBITOR OF GROWTH PROTEIN 5"/>
    <property type="match status" value="1"/>
</dbReference>
<dbReference type="Pfam" id="PF12998">
    <property type="entry name" value="ING"/>
    <property type="match status" value="1"/>
</dbReference>
<dbReference type="SMART" id="SM01408">
    <property type="entry name" value="ING"/>
    <property type="match status" value="1"/>
</dbReference>
<dbReference type="SMART" id="SM00249">
    <property type="entry name" value="PHD"/>
    <property type="match status" value="1"/>
</dbReference>
<dbReference type="SUPFAM" id="SSF57903">
    <property type="entry name" value="FYVE/PHD zinc finger"/>
    <property type="match status" value="1"/>
</dbReference>
<dbReference type="PROSITE" id="PS01359">
    <property type="entry name" value="ZF_PHD_1"/>
    <property type="match status" value="1"/>
</dbReference>
<dbReference type="PROSITE" id="PS50016">
    <property type="entry name" value="ZF_PHD_2"/>
    <property type="match status" value="1"/>
</dbReference>
<keyword id="KW-0025">Alternative splicing</keyword>
<keyword id="KW-0156">Chromatin regulator</keyword>
<keyword id="KW-0158">Chromosome</keyword>
<keyword id="KW-0479">Metal-binding</keyword>
<keyword id="KW-0539">Nucleus</keyword>
<keyword id="KW-1185">Reference proteome</keyword>
<keyword id="KW-0862">Zinc</keyword>
<keyword id="KW-0863">Zinc-finger</keyword>
<name>ING5_DROME</name>
<sequence>MSSAIYLENYLDGLESLPTELERNFKLMRKLDDRAQTAMKSIDSHAKDFMRKLGENGAMSEDERRERQEDIKALFGKAKEYSDDKVQLAIQTYELVDKQIRRLDNDLARFEGEIQEKASSTRAKSEEVVAKKGRKKTKDSKTTGKKKKSASSDEETGRGNNQSNANSSVNSSSNAGQGSKKKKSKVNQEKETRKGGAQKKTVEVDDSEKESCHTAATHPSDVMDMPVDPNEPTYCLCHQVSYGEMIGCDNPDCPIEWFHFACVGLTTKPKGKWFCPKCTQDRKKK</sequence>
<protein>
    <recommendedName>
        <fullName evidence="9">Inhibitor of growth protein 5</fullName>
    </recommendedName>
    <alternativeName>
        <fullName evidence="12">Inhibitor of growth family member 5</fullName>
    </alternativeName>
</protein>
<evidence type="ECO:0000250" key="1">
    <source>
        <dbReference type="UniProtKB" id="Q8WYH8"/>
    </source>
</evidence>
<evidence type="ECO:0000255" key="2">
    <source>
        <dbReference type="PIRSR" id="PIRSR628651-50"/>
    </source>
</evidence>
<evidence type="ECO:0000255" key="3">
    <source>
        <dbReference type="PIRSR" id="PIRSR628651-51"/>
    </source>
</evidence>
<evidence type="ECO:0000255" key="4">
    <source>
        <dbReference type="PROSITE-ProRule" id="PRU00146"/>
    </source>
</evidence>
<evidence type="ECO:0000255" key="5">
    <source>
        <dbReference type="RuleBase" id="RU361213"/>
    </source>
</evidence>
<evidence type="ECO:0000256" key="6">
    <source>
        <dbReference type="SAM" id="MobiDB-lite"/>
    </source>
</evidence>
<evidence type="ECO:0000269" key="7">
    <source>
    </source>
</evidence>
<evidence type="ECO:0000303" key="8">
    <source>
    </source>
</evidence>
<evidence type="ECO:0000305" key="9"/>
<evidence type="ECO:0000312" key="10">
    <source>
        <dbReference type="EMBL" id="AAN10835.1"/>
    </source>
</evidence>
<evidence type="ECO:0000312" key="11">
    <source>
        <dbReference type="EMBL" id="ADR66771.1"/>
    </source>
</evidence>
<evidence type="ECO:0000312" key="12">
    <source>
        <dbReference type="FlyBase" id="FBgn0032516"/>
    </source>
</evidence>
<evidence type="ECO:0000312" key="13">
    <source>
        <dbReference type="Proteomes" id="UP000000803"/>
    </source>
</evidence>
<gene>
    <name evidence="12" type="primary">Ing5</name>
    <name evidence="12" type="ORF">CG9293</name>
</gene>
<feature type="chain" id="PRO_0000456246" description="Inhibitor of growth protein 5" evidence="9">
    <location>
        <begin position="1"/>
        <end position="285"/>
    </location>
</feature>
<feature type="zinc finger region" description="PHD-type" evidence="4">
    <location>
        <begin position="232"/>
        <end position="281"/>
    </location>
</feature>
<feature type="region of interest" description="Disordered" evidence="6">
    <location>
        <begin position="116"/>
        <end position="225"/>
    </location>
</feature>
<feature type="compositionally biased region" description="Basic residues" evidence="6">
    <location>
        <begin position="131"/>
        <end position="149"/>
    </location>
</feature>
<feature type="compositionally biased region" description="Low complexity" evidence="6">
    <location>
        <begin position="160"/>
        <end position="178"/>
    </location>
</feature>
<feature type="binding site" evidence="3 4">
    <location>
        <position position="235"/>
    </location>
    <ligand>
        <name>Zn(2+)</name>
        <dbReference type="ChEBI" id="CHEBI:29105"/>
        <label>1</label>
    </ligand>
</feature>
<feature type="binding site" evidence="3 4">
    <location>
        <position position="237"/>
    </location>
    <ligand>
        <name>Zn(2+)</name>
        <dbReference type="ChEBI" id="CHEBI:29105"/>
        <label>1</label>
    </ligand>
</feature>
<feature type="binding site" evidence="3 4">
    <location>
        <position position="248"/>
    </location>
    <ligand>
        <name>Zn(2+)</name>
        <dbReference type="ChEBI" id="CHEBI:29105"/>
        <label>2</label>
    </ligand>
</feature>
<feature type="binding site" evidence="3 4">
    <location>
        <position position="253"/>
    </location>
    <ligand>
        <name>Zn(2+)</name>
        <dbReference type="ChEBI" id="CHEBI:29105"/>
        <label>2</label>
    </ligand>
</feature>
<feature type="binding site" evidence="3">
    <location>
        <position position="259"/>
    </location>
    <ligand>
        <name>Zn(2+)</name>
        <dbReference type="ChEBI" id="CHEBI:29105"/>
        <label>1</label>
    </ligand>
</feature>
<feature type="binding site" evidence="3 4">
    <location>
        <position position="262"/>
    </location>
    <ligand>
        <name>Zn(2+)</name>
        <dbReference type="ChEBI" id="CHEBI:29105"/>
        <label>1</label>
    </ligand>
</feature>
<feature type="binding site" evidence="3 4">
    <location>
        <position position="275"/>
    </location>
    <ligand>
        <name>Zn(2+)</name>
        <dbReference type="ChEBI" id="CHEBI:29105"/>
        <label>2</label>
    </ligand>
</feature>
<feature type="binding site" evidence="3 4">
    <location>
        <position position="278"/>
    </location>
    <ligand>
        <name>Zn(2+)</name>
        <dbReference type="ChEBI" id="CHEBI:29105"/>
        <label>2</label>
    </ligand>
</feature>
<feature type="site" description="Histone H3K4me3 binding" evidence="2">
    <location>
        <position position="234"/>
    </location>
</feature>
<feature type="site" description="Histone H3K4me3 binding" evidence="2">
    <location>
        <position position="245"/>
    </location>
</feature>
<feature type="site" description="Histone H3K4me3 binding" evidence="2">
    <location>
        <position position="249"/>
    </location>
</feature>
<feature type="site" description="Histone H3K4me3 binding" evidence="2">
    <location>
        <position position="257"/>
    </location>
</feature>
<feature type="splice variant" id="VSP_061597" description="In isoform B." evidence="8">
    <location>
        <begin position="185"/>
        <end position="198"/>
    </location>
</feature>
<accession>Q9VJY8</accession>
<accession>Q8IP71</accession>
<accession>Q95RB4</accession>
<comment type="function">
    <text evidence="7">Component of the Enok complex which has a histone H3 acetyltransferase activity.</text>
</comment>
<comment type="subunit">
    <text evidence="7">Component of the Enok complex composed of at least Br140, enok, Eaf6 and Ing5.</text>
</comment>
<comment type="subcellular location">
    <subcellularLocation>
        <location evidence="5 7">Nucleus</location>
    </subcellularLocation>
    <subcellularLocation>
        <location evidence="1">Chromosome</location>
    </subcellularLocation>
</comment>
<comment type="alternative products">
    <event type="alternative splicing"/>
    <isoform>
        <id>Q9VJY8-1</id>
        <name evidence="12">A</name>
        <sequence type="displayed"/>
    </isoform>
    <isoform>
        <id>Q9VJY8-2</id>
        <name evidence="12">B</name>
        <sequence type="described" ref="VSP_061597"/>
    </isoform>
</comment>
<comment type="domain">
    <text evidence="5">The PHD-type zinc finger mediates the binding to H3K4me3.</text>
</comment>
<comment type="similarity">
    <text evidence="5">Belongs to the ING family.</text>
</comment>